<protein>
    <recommendedName>
        <fullName>Epidermal growth factor receptor kinase substrate 8-like protein 3</fullName>
        <shortName>EPS8-like protein 3</shortName>
    </recommendedName>
    <alternativeName>
        <fullName>Epidermal growth factor receptor pathway substrate 8-related protein 3</fullName>
        <shortName>EPS8-related protein 3</shortName>
    </alternativeName>
</protein>
<sequence length="600" mass="68216">MSRPSSRAIYLHRKEYSQSMASEPTLLQHRVEHLMTCKLGTQRVREPKDALQKLQEMDAQGRVWSQDLFLQVRDGWLHLLDIETKEELDSYRLDNIKAIDVALNTCSYNSILSVTVQESGLPGISTLLFQCQEVGAEQLRTSLQKALEEELEERPRFGVHHPSQDRWKGPPLERPLPIQQAPPLEQRFSPEHRFPPEQPHNMTSERSISPSSRSLTHYPSAREPNGFTLPPPPRRAPSPEDPERDEEVLNHVLRDIELFAGKLKEVQARNSHKKTKLGRKKKKSKNGITQAEYIDCFQKIKLSFNLLGKLALRMQETSAPEFVGLIFQTLKFILSQCPEAGLPAKVISPLLTPKAIDLLQSCLSPPEDTLWKSLGTSWTTSWADWTGSEPPPYQPTFYDGWQIPQPRSMMPITNQDSISLRGSRMRSSLHFPRDEPYNHNPEYEDSNLPLSSPSPGRAALKMQVLYEFEARNAQELTVAQGEILEVLDQSKRWWLVKNEAGLTGYIPSNILEPLPAGAPRGHRQPSFRAPMLRLSSKPEEVTAWLQAENFSTVTVRTLGSLMGSQLLHMRPGELQMLCPQEAPRIQARLDAVRRMLGMTH</sequence>
<gene>
    <name type="primary">Eps8l3</name>
    <name type="synonym">Eps8r3</name>
</gene>
<proteinExistence type="evidence at transcript level"/>
<feature type="chain" id="PRO_0000239088" description="Epidermal growth factor receptor kinase substrate 8-like protein 3">
    <location>
        <begin position="1"/>
        <end position="600"/>
    </location>
</feature>
<feature type="domain" description="PTB" evidence="3">
    <location>
        <begin position="28"/>
        <end position="155"/>
    </location>
</feature>
<feature type="domain" description="SH3" evidence="4">
    <location>
        <begin position="457"/>
        <end position="516"/>
    </location>
</feature>
<feature type="region of interest" description="Disordered" evidence="5">
    <location>
        <begin position="152"/>
        <end position="245"/>
    </location>
</feature>
<feature type="region of interest" description="Disordered" evidence="5">
    <location>
        <begin position="429"/>
        <end position="452"/>
    </location>
</feature>
<feature type="compositionally biased region" description="Low complexity" evidence="5">
    <location>
        <begin position="204"/>
        <end position="214"/>
    </location>
</feature>
<feature type="modified residue" description="Phosphoserine" evidence="2">
    <location>
        <position position="238"/>
    </location>
</feature>
<name>ES8L3_MOUSE</name>
<organism>
    <name type="scientific">Mus musculus</name>
    <name type="common">Mouse</name>
    <dbReference type="NCBI Taxonomy" id="10090"/>
    <lineage>
        <taxon>Eukaryota</taxon>
        <taxon>Metazoa</taxon>
        <taxon>Chordata</taxon>
        <taxon>Craniata</taxon>
        <taxon>Vertebrata</taxon>
        <taxon>Euteleostomi</taxon>
        <taxon>Mammalia</taxon>
        <taxon>Eutheria</taxon>
        <taxon>Euarchontoglires</taxon>
        <taxon>Glires</taxon>
        <taxon>Rodentia</taxon>
        <taxon>Myomorpha</taxon>
        <taxon>Muroidea</taxon>
        <taxon>Muridae</taxon>
        <taxon>Murinae</taxon>
        <taxon>Mus</taxon>
        <taxon>Mus</taxon>
    </lineage>
</organism>
<dbReference type="EMBL" id="BC014734">
    <property type="protein sequence ID" value="AAH14734.1"/>
    <property type="molecule type" value="mRNA"/>
</dbReference>
<dbReference type="EMBL" id="AY074932">
    <property type="protein sequence ID" value="AAL76121.1"/>
    <property type="molecule type" value="mRNA"/>
</dbReference>
<dbReference type="EMBL" id="AK167630">
    <property type="protein sequence ID" value="BAE39681.1"/>
    <property type="molecule type" value="mRNA"/>
</dbReference>
<dbReference type="CCDS" id="CCDS38594.1"/>
<dbReference type="RefSeq" id="NP_598628.1">
    <property type="nucleotide sequence ID" value="NM_133867.2"/>
</dbReference>
<dbReference type="RefSeq" id="XP_006502527.2">
    <property type="nucleotide sequence ID" value="XM_006502464.4"/>
</dbReference>
<dbReference type="SMR" id="Q91WL0"/>
<dbReference type="FunCoup" id="Q91WL0">
    <property type="interactions" value="138"/>
</dbReference>
<dbReference type="STRING" id="10090.ENSMUSP00000042004"/>
<dbReference type="iPTMnet" id="Q91WL0"/>
<dbReference type="PhosphoSitePlus" id="Q91WL0"/>
<dbReference type="PaxDb" id="10090-ENSMUSP00000042004"/>
<dbReference type="PeptideAtlas" id="Q91WL0"/>
<dbReference type="ProteomicsDB" id="275950"/>
<dbReference type="Antibodypedia" id="53746">
    <property type="antibodies" value="167 antibodies from 26 providers"/>
</dbReference>
<dbReference type="DNASU" id="99662"/>
<dbReference type="Ensembl" id="ENSMUST00000037375.10">
    <property type="protein sequence ID" value="ENSMUSP00000042004.9"/>
    <property type="gene ID" value="ENSMUSG00000040600.10"/>
</dbReference>
<dbReference type="GeneID" id="99662"/>
<dbReference type="KEGG" id="mmu:99662"/>
<dbReference type="UCSC" id="uc008qxo.2">
    <property type="organism name" value="mouse"/>
</dbReference>
<dbReference type="AGR" id="MGI:2139743"/>
<dbReference type="CTD" id="79574"/>
<dbReference type="MGI" id="MGI:2139743">
    <property type="gene designation" value="Eps8l3"/>
</dbReference>
<dbReference type="VEuPathDB" id="HostDB:ENSMUSG00000040600"/>
<dbReference type="eggNOG" id="KOG3557">
    <property type="taxonomic scope" value="Eukaryota"/>
</dbReference>
<dbReference type="GeneTree" id="ENSGT00940000158169"/>
<dbReference type="HOGENOM" id="CLU_014510_0_1_1"/>
<dbReference type="InParanoid" id="Q91WL0"/>
<dbReference type="OMA" id="WTGNEPP"/>
<dbReference type="OrthoDB" id="4680325at2759"/>
<dbReference type="PhylomeDB" id="Q91WL0"/>
<dbReference type="TreeFam" id="TF313069"/>
<dbReference type="BioGRID-ORCS" id="99662">
    <property type="hits" value="2 hits in 78 CRISPR screens"/>
</dbReference>
<dbReference type="PRO" id="PR:Q91WL0"/>
<dbReference type="Proteomes" id="UP000000589">
    <property type="component" value="Chromosome 3"/>
</dbReference>
<dbReference type="RNAct" id="Q91WL0">
    <property type="molecule type" value="protein"/>
</dbReference>
<dbReference type="Bgee" id="ENSMUSG00000040600">
    <property type="expression patterns" value="Expressed in intestinal villus and 77 other cell types or tissues"/>
</dbReference>
<dbReference type="ExpressionAtlas" id="Q91WL0">
    <property type="expression patterns" value="baseline and differential"/>
</dbReference>
<dbReference type="GO" id="GO:0005737">
    <property type="term" value="C:cytoplasm"/>
    <property type="evidence" value="ECO:0000250"/>
    <property type="project" value="UniProtKB"/>
</dbReference>
<dbReference type="GO" id="GO:0005085">
    <property type="term" value="F:guanyl-nucleotide exchange factor activity"/>
    <property type="evidence" value="ECO:0007669"/>
    <property type="project" value="Ensembl"/>
</dbReference>
<dbReference type="GO" id="GO:0042634">
    <property type="term" value="P:regulation of hair cycle"/>
    <property type="evidence" value="ECO:0007669"/>
    <property type="project" value="Ensembl"/>
</dbReference>
<dbReference type="CDD" id="cd01210">
    <property type="entry name" value="PTB_EPS8"/>
    <property type="match status" value="1"/>
</dbReference>
<dbReference type="CDD" id="cd11764">
    <property type="entry name" value="SH3_Eps8"/>
    <property type="match status" value="1"/>
</dbReference>
<dbReference type="FunFam" id="2.30.30.40:FF:000195">
    <property type="entry name" value="epidermal growth factor receptor kinase substrate 8-like protein 3"/>
    <property type="match status" value="1"/>
</dbReference>
<dbReference type="FunFam" id="1.10.150.50:FF:000081">
    <property type="entry name" value="EPS8 like 3"/>
    <property type="match status" value="1"/>
</dbReference>
<dbReference type="FunFam" id="2.30.29.30:FF:000293">
    <property type="entry name" value="EPS8 like 3"/>
    <property type="match status" value="1"/>
</dbReference>
<dbReference type="Gene3D" id="2.30.29.30">
    <property type="entry name" value="Pleckstrin-homology domain (PH domain)/Phosphotyrosine-binding domain (PTB)"/>
    <property type="match status" value="1"/>
</dbReference>
<dbReference type="Gene3D" id="2.30.30.40">
    <property type="entry name" value="SH3 Domains"/>
    <property type="match status" value="1"/>
</dbReference>
<dbReference type="Gene3D" id="1.10.150.50">
    <property type="entry name" value="Transcription Factor, Ets-1"/>
    <property type="match status" value="1"/>
</dbReference>
<dbReference type="InterPro" id="IPR039801">
    <property type="entry name" value="EPS8-like"/>
</dbReference>
<dbReference type="InterPro" id="IPR055093">
    <property type="entry name" value="EPS8_2nd"/>
</dbReference>
<dbReference type="InterPro" id="IPR033928">
    <property type="entry name" value="EPS8_PTB"/>
</dbReference>
<dbReference type="InterPro" id="IPR035462">
    <property type="entry name" value="Eps8_SH3"/>
</dbReference>
<dbReference type="InterPro" id="IPR011993">
    <property type="entry name" value="PH-like_dom_sf"/>
</dbReference>
<dbReference type="InterPro" id="IPR013625">
    <property type="entry name" value="PTB"/>
</dbReference>
<dbReference type="InterPro" id="IPR013761">
    <property type="entry name" value="SAM/pointed_sf"/>
</dbReference>
<dbReference type="InterPro" id="IPR041418">
    <property type="entry name" value="SAM_3"/>
</dbReference>
<dbReference type="InterPro" id="IPR036028">
    <property type="entry name" value="SH3-like_dom_sf"/>
</dbReference>
<dbReference type="InterPro" id="IPR001452">
    <property type="entry name" value="SH3_domain"/>
</dbReference>
<dbReference type="PANTHER" id="PTHR12287:SF22">
    <property type="entry name" value="EPIDERMAL GROWTH FACTOR RECEPTOR KINASE SUBSTRATE 8-LIKE PROTEIN 3"/>
    <property type="match status" value="1"/>
</dbReference>
<dbReference type="PANTHER" id="PTHR12287">
    <property type="entry name" value="EPIDERMAL GROWTH FACTOR RECEPTOR KINASE SUBSTRATE EPS8-RELATED PROTEIN"/>
    <property type="match status" value="1"/>
</dbReference>
<dbReference type="Pfam" id="PF22975">
    <property type="entry name" value="EPS8_2nd"/>
    <property type="match status" value="1"/>
</dbReference>
<dbReference type="Pfam" id="PF08416">
    <property type="entry name" value="PTB"/>
    <property type="match status" value="1"/>
</dbReference>
<dbReference type="Pfam" id="PF18016">
    <property type="entry name" value="SAM_3"/>
    <property type="match status" value="1"/>
</dbReference>
<dbReference type="Pfam" id="PF00018">
    <property type="entry name" value="SH3_1"/>
    <property type="match status" value="1"/>
</dbReference>
<dbReference type="SMART" id="SM00326">
    <property type="entry name" value="SH3"/>
    <property type="match status" value="1"/>
</dbReference>
<dbReference type="SUPFAM" id="SSF50729">
    <property type="entry name" value="PH domain-like"/>
    <property type="match status" value="1"/>
</dbReference>
<dbReference type="SUPFAM" id="SSF50044">
    <property type="entry name" value="SH3-domain"/>
    <property type="match status" value="1"/>
</dbReference>
<dbReference type="PROSITE" id="PS50002">
    <property type="entry name" value="SH3"/>
    <property type="match status" value="1"/>
</dbReference>
<keyword id="KW-0963">Cytoplasm</keyword>
<keyword id="KW-0597">Phosphoprotein</keyword>
<keyword id="KW-1185">Reference proteome</keyword>
<keyword id="KW-0728">SH3 domain</keyword>
<accession>Q91WL0</accession>
<accession>Q3TJ14</accession>
<reference key="1">
    <citation type="journal article" date="2003" name="Genomics">
        <title>In silico analysis of the EPS8 gene family: genomic organization, expression profile, and protein structure.</title>
        <authorList>
            <person name="Tocchetti A."/>
            <person name="Confalonieri S."/>
            <person name="Scita G."/>
            <person name="Di Fiore P.P."/>
            <person name="Betsholtz C."/>
        </authorList>
    </citation>
    <scope>NUCLEOTIDE SEQUENCE [MRNA]</scope>
    <source>
        <strain>C57BL/6J</strain>
    </source>
</reference>
<reference key="2">
    <citation type="journal article" date="2004" name="Genome Res.">
        <title>The status, quality, and expansion of the NIH full-length cDNA project: the Mammalian Gene Collection (MGC).</title>
        <authorList>
            <consortium name="The MGC Project Team"/>
        </authorList>
    </citation>
    <scope>NUCLEOTIDE SEQUENCE [LARGE SCALE MRNA]</scope>
    <source>
        <strain>FVB/N</strain>
        <tissue>Colon</tissue>
    </source>
</reference>
<reference key="3">
    <citation type="journal article" date="2005" name="Science">
        <title>The transcriptional landscape of the mammalian genome.</title>
        <authorList>
            <person name="Carninci P."/>
            <person name="Kasukawa T."/>
            <person name="Katayama S."/>
            <person name="Gough J."/>
            <person name="Frith M.C."/>
            <person name="Maeda N."/>
            <person name="Oyama R."/>
            <person name="Ravasi T."/>
            <person name="Lenhard B."/>
            <person name="Wells C."/>
            <person name="Kodzius R."/>
            <person name="Shimokawa K."/>
            <person name="Bajic V.B."/>
            <person name="Brenner S.E."/>
            <person name="Batalov S."/>
            <person name="Forrest A.R."/>
            <person name="Zavolan M."/>
            <person name="Davis M.J."/>
            <person name="Wilming L.G."/>
            <person name="Aidinis V."/>
            <person name="Allen J.E."/>
            <person name="Ambesi-Impiombato A."/>
            <person name="Apweiler R."/>
            <person name="Aturaliya R.N."/>
            <person name="Bailey T.L."/>
            <person name="Bansal M."/>
            <person name="Baxter L."/>
            <person name="Beisel K.W."/>
            <person name="Bersano T."/>
            <person name="Bono H."/>
            <person name="Chalk A.M."/>
            <person name="Chiu K.P."/>
            <person name="Choudhary V."/>
            <person name="Christoffels A."/>
            <person name="Clutterbuck D.R."/>
            <person name="Crowe M.L."/>
            <person name="Dalla E."/>
            <person name="Dalrymple B.P."/>
            <person name="de Bono B."/>
            <person name="Della Gatta G."/>
            <person name="di Bernardo D."/>
            <person name="Down T."/>
            <person name="Engstrom P."/>
            <person name="Fagiolini M."/>
            <person name="Faulkner G."/>
            <person name="Fletcher C.F."/>
            <person name="Fukushima T."/>
            <person name="Furuno M."/>
            <person name="Futaki S."/>
            <person name="Gariboldi M."/>
            <person name="Georgii-Hemming P."/>
            <person name="Gingeras T.R."/>
            <person name="Gojobori T."/>
            <person name="Green R.E."/>
            <person name="Gustincich S."/>
            <person name="Harbers M."/>
            <person name="Hayashi Y."/>
            <person name="Hensch T.K."/>
            <person name="Hirokawa N."/>
            <person name="Hill D."/>
            <person name="Huminiecki L."/>
            <person name="Iacono M."/>
            <person name="Ikeo K."/>
            <person name="Iwama A."/>
            <person name="Ishikawa T."/>
            <person name="Jakt M."/>
            <person name="Kanapin A."/>
            <person name="Katoh M."/>
            <person name="Kawasawa Y."/>
            <person name="Kelso J."/>
            <person name="Kitamura H."/>
            <person name="Kitano H."/>
            <person name="Kollias G."/>
            <person name="Krishnan S.P."/>
            <person name="Kruger A."/>
            <person name="Kummerfeld S.K."/>
            <person name="Kurochkin I.V."/>
            <person name="Lareau L.F."/>
            <person name="Lazarevic D."/>
            <person name="Lipovich L."/>
            <person name="Liu J."/>
            <person name="Liuni S."/>
            <person name="McWilliam S."/>
            <person name="Madan Babu M."/>
            <person name="Madera M."/>
            <person name="Marchionni L."/>
            <person name="Matsuda H."/>
            <person name="Matsuzawa S."/>
            <person name="Miki H."/>
            <person name="Mignone F."/>
            <person name="Miyake S."/>
            <person name="Morris K."/>
            <person name="Mottagui-Tabar S."/>
            <person name="Mulder N."/>
            <person name="Nakano N."/>
            <person name="Nakauchi H."/>
            <person name="Ng P."/>
            <person name="Nilsson R."/>
            <person name="Nishiguchi S."/>
            <person name="Nishikawa S."/>
            <person name="Nori F."/>
            <person name="Ohara O."/>
            <person name="Okazaki Y."/>
            <person name="Orlando V."/>
            <person name="Pang K.C."/>
            <person name="Pavan W.J."/>
            <person name="Pavesi G."/>
            <person name="Pesole G."/>
            <person name="Petrovsky N."/>
            <person name="Piazza S."/>
            <person name="Reed J."/>
            <person name="Reid J.F."/>
            <person name="Ring B.Z."/>
            <person name="Ringwald M."/>
            <person name="Rost B."/>
            <person name="Ruan Y."/>
            <person name="Salzberg S.L."/>
            <person name="Sandelin A."/>
            <person name="Schneider C."/>
            <person name="Schoenbach C."/>
            <person name="Sekiguchi K."/>
            <person name="Semple C.A."/>
            <person name="Seno S."/>
            <person name="Sessa L."/>
            <person name="Sheng Y."/>
            <person name="Shibata Y."/>
            <person name="Shimada H."/>
            <person name="Shimada K."/>
            <person name="Silva D."/>
            <person name="Sinclair B."/>
            <person name="Sperling S."/>
            <person name="Stupka E."/>
            <person name="Sugiura K."/>
            <person name="Sultana R."/>
            <person name="Takenaka Y."/>
            <person name="Taki K."/>
            <person name="Tammoja K."/>
            <person name="Tan S.L."/>
            <person name="Tang S."/>
            <person name="Taylor M.S."/>
            <person name="Tegner J."/>
            <person name="Teichmann S.A."/>
            <person name="Ueda H.R."/>
            <person name="van Nimwegen E."/>
            <person name="Verardo R."/>
            <person name="Wei C.L."/>
            <person name="Yagi K."/>
            <person name="Yamanishi H."/>
            <person name="Zabarovsky E."/>
            <person name="Zhu S."/>
            <person name="Zimmer A."/>
            <person name="Hide W."/>
            <person name="Bult C."/>
            <person name="Grimmond S.M."/>
            <person name="Teasdale R.D."/>
            <person name="Liu E.T."/>
            <person name="Brusic V."/>
            <person name="Quackenbush J."/>
            <person name="Wahlestedt C."/>
            <person name="Mattick J.S."/>
            <person name="Hume D.A."/>
            <person name="Kai C."/>
            <person name="Sasaki D."/>
            <person name="Tomaru Y."/>
            <person name="Fukuda S."/>
            <person name="Kanamori-Katayama M."/>
            <person name="Suzuki M."/>
            <person name="Aoki J."/>
            <person name="Arakawa T."/>
            <person name="Iida J."/>
            <person name="Imamura K."/>
            <person name="Itoh M."/>
            <person name="Kato T."/>
            <person name="Kawaji H."/>
            <person name="Kawagashira N."/>
            <person name="Kawashima T."/>
            <person name="Kojima M."/>
            <person name="Kondo S."/>
            <person name="Konno H."/>
            <person name="Nakano K."/>
            <person name="Ninomiya N."/>
            <person name="Nishio T."/>
            <person name="Okada M."/>
            <person name="Plessy C."/>
            <person name="Shibata K."/>
            <person name="Shiraki T."/>
            <person name="Suzuki S."/>
            <person name="Tagami M."/>
            <person name="Waki K."/>
            <person name="Watahiki A."/>
            <person name="Okamura-Oho Y."/>
            <person name="Suzuki H."/>
            <person name="Kawai J."/>
            <person name="Hayashizaki Y."/>
        </authorList>
    </citation>
    <scope>NUCLEOTIDE SEQUENCE [LARGE SCALE MRNA] OF 1-278</scope>
</reference>
<reference key="4">
    <citation type="journal article" date="2004" name="Mol. Biol. Cell">
        <title>The eps8 family of proteins links growth factor stimulation to actin reorganization generating functional redundancy in the Ras/Rac pathway.</title>
        <authorList>
            <person name="Offenhaeuser N."/>
            <person name="Borgonovo A."/>
            <person name="Disanza A."/>
            <person name="Romano P."/>
            <person name="Ponzanelli I."/>
            <person name="Iannolo G."/>
            <person name="Di Fiore P.P."/>
            <person name="Scita G."/>
        </authorList>
    </citation>
    <scope>TISSUE SPECIFICITY</scope>
</reference>
<comment type="subunit">
    <text evidence="1">Interacts with ABI1. Part of a complex that contains SOS1, ABI1 and EPS8L2. Interacts with FASLG (By similarity).</text>
</comment>
<comment type="subcellular location">
    <subcellularLocation>
        <location evidence="1">Cytoplasm</location>
    </subcellularLocation>
</comment>
<comment type="tissue specificity">
    <text evidence="6">Detected in embryonic gut. Detected in adult testis, placenta, adrenal gland and intestine.</text>
</comment>
<comment type="similarity">
    <text evidence="7">Belongs to the EPS8 family.</text>
</comment>
<evidence type="ECO:0000250" key="1"/>
<evidence type="ECO:0000250" key="2">
    <source>
        <dbReference type="UniProtKB" id="Q8TE67"/>
    </source>
</evidence>
<evidence type="ECO:0000255" key="3"/>
<evidence type="ECO:0000255" key="4">
    <source>
        <dbReference type="PROSITE-ProRule" id="PRU00192"/>
    </source>
</evidence>
<evidence type="ECO:0000256" key="5">
    <source>
        <dbReference type="SAM" id="MobiDB-lite"/>
    </source>
</evidence>
<evidence type="ECO:0000269" key="6">
    <source>
    </source>
</evidence>
<evidence type="ECO:0000305" key="7"/>